<organism>
    <name type="scientific">Pyrococcus horikoshii (strain ATCC 700860 / DSM 12428 / JCM 9974 / NBRC 100139 / OT-3)</name>
    <dbReference type="NCBI Taxonomy" id="70601"/>
    <lineage>
        <taxon>Archaea</taxon>
        <taxon>Methanobacteriati</taxon>
        <taxon>Methanobacteriota</taxon>
        <taxon>Thermococci</taxon>
        <taxon>Thermococcales</taxon>
        <taxon>Thermococcaceae</taxon>
        <taxon>Pyrococcus</taxon>
    </lineage>
</organism>
<sequence>MKEYNIVITGVGGQGILTAANLLGWAALKAGYKVRVGEVHGMSQRFGSVIAYVRFGDDVYGAMVPEGKADVILSFEPVEALRYINYLKKGGLVFTNARPIPPVQVSMGLATYPSLEEIKRIVEEEFNGKFLAFDAEKLAIEAGNVITTNVVLIGALTQTPGFPLSAEHVKEVIRLSVPPKAVDVNMKAFDLGVKAAKEMLNL</sequence>
<accession>O58496</accession>
<gene>
    <name type="primary">iorB</name>
    <name type="ordered locus">PH0764</name>
</gene>
<comment type="function">
    <text evidence="1">Catalyzes the ferredoxin-dependent oxidative decarboxylation of arylpyruvates.</text>
</comment>
<comment type="catalytic activity">
    <reaction>
        <text>indole-3-pyruvate + 2 oxidized [2Fe-2S]-[ferredoxin] + CoA = (indol-3-yl)acetyl-CoA + 2 reduced [2Fe-2S]-[ferredoxin] + CO2 + H(+)</text>
        <dbReference type="Rhea" id="RHEA:12645"/>
        <dbReference type="Rhea" id="RHEA-COMP:10000"/>
        <dbReference type="Rhea" id="RHEA-COMP:10001"/>
        <dbReference type="ChEBI" id="CHEBI:15378"/>
        <dbReference type="ChEBI" id="CHEBI:16526"/>
        <dbReference type="ChEBI" id="CHEBI:17640"/>
        <dbReference type="ChEBI" id="CHEBI:33737"/>
        <dbReference type="ChEBI" id="CHEBI:33738"/>
        <dbReference type="ChEBI" id="CHEBI:57271"/>
        <dbReference type="ChEBI" id="CHEBI:57287"/>
        <dbReference type="EC" id="1.2.7.8"/>
    </reaction>
</comment>
<comment type="subunit">
    <text>Heterodimer of the IorA and IorB subunits.</text>
</comment>
<dbReference type="EC" id="1.2.7.8"/>
<dbReference type="EMBL" id="BA000001">
    <property type="protein sequence ID" value="BAA29855.1"/>
    <property type="molecule type" value="Genomic_DNA"/>
</dbReference>
<dbReference type="PIR" id="E71124">
    <property type="entry name" value="E71124"/>
</dbReference>
<dbReference type="RefSeq" id="WP_010884855.1">
    <property type="nucleotide sequence ID" value="NC_000961.1"/>
</dbReference>
<dbReference type="SMR" id="O58496"/>
<dbReference type="IntAct" id="O58496">
    <property type="interactions" value="1"/>
</dbReference>
<dbReference type="MINT" id="O58496"/>
<dbReference type="STRING" id="70601.gene:9377712"/>
<dbReference type="EnsemblBacteria" id="BAA29855">
    <property type="protein sequence ID" value="BAA29855"/>
    <property type="gene ID" value="BAA29855"/>
</dbReference>
<dbReference type="GeneID" id="1443090"/>
<dbReference type="KEGG" id="pho:PH0764"/>
<dbReference type="eggNOG" id="arCOG01602">
    <property type="taxonomic scope" value="Archaea"/>
</dbReference>
<dbReference type="OrthoDB" id="53326at2157"/>
<dbReference type="Proteomes" id="UP000000752">
    <property type="component" value="Chromosome"/>
</dbReference>
<dbReference type="GO" id="GO:0043805">
    <property type="term" value="F:indolepyruvate ferredoxin oxidoreductase activity"/>
    <property type="evidence" value="ECO:0007669"/>
    <property type="project" value="UniProtKB-EC"/>
</dbReference>
<dbReference type="Gene3D" id="3.40.920.10">
    <property type="entry name" value="Pyruvate-ferredoxin oxidoreductase, PFOR, domain III"/>
    <property type="match status" value="1"/>
</dbReference>
<dbReference type="InterPro" id="IPR017719">
    <property type="entry name" value="Indolepyruvate_Fd_OxRdtase_bsu"/>
</dbReference>
<dbReference type="InterPro" id="IPR052198">
    <property type="entry name" value="IorB_Oxidoreductase"/>
</dbReference>
<dbReference type="InterPro" id="IPR019752">
    <property type="entry name" value="Pyrv/ketoisovalerate_OxRed_cat"/>
</dbReference>
<dbReference type="InterPro" id="IPR002869">
    <property type="entry name" value="Pyrv_flavodox_OxRed_cen"/>
</dbReference>
<dbReference type="NCBIfam" id="TIGR03334">
    <property type="entry name" value="IOR_beta"/>
    <property type="match status" value="1"/>
</dbReference>
<dbReference type="NCBIfam" id="NF005326">
    <property type="entry name" value="PRK06853.1-6"/>
    <property type="match status" value="1"/>
</dbReference>
<dbReference type="PANTHER" id="PTHR43854">
    <property type="entry name" value="INDOLEPYRUVATE OXIDOREDUCTASE SUBUNIT IORB"/>
    <property type="match status" value="1"/>
</dbReference>
<dbReference type="PANTHER" id="PTHR43854:SF1">
    <property type="entry name" value="INDOLEPYRUVATE OXIDOREDUCTASE SUBUNIT IORB"/>
    <property type="match status" value="1"/>
</dbReference>
<dbReference type="Pfam" id="PF01558">
    <property type="entry name" value="POR"/>
    <property type="match status" value="1"/>
</dbReference>
<dbReference type="SUPFAM" id="SSF53323">
    <property type="entry name" value="Pyruvate-ferredoxin oxidoreductase, PFOR, domain III"/>
    <property type="match status" value="1"/>
</dbReference>
<protein>
    <recommendedName>
        <fullName>Indolepyruvate oxidoreductase subunit IorB</fullName>
        <shortName>IOR</shortName>
        <ecNumber>1.2.7.8</ecNumber>
    </recommendedName>
    <alternativeName>
        <fullName>Indolepyruvate ferredoxin oxidoreductase subunit beta</fullName>
    </alternativeName>
</protein>
<evidence type="ECO:0000250" key="1"/>
<keyword id="KW-0560">Oxidoreductase</keyword>
<reference key="1">
    <citation type="journal article" date="1998" name="DNA Res.">
        <title>Complete sequence and gene organization of the genome of a hyper-thermophilic archaebacterium, Pyrococcus horikoshii OT3.</title>
        <authorList>
            <person name="Kawarabayasi Y."/>
            <person name="Sawada M."/>
            <person name="Horikawa H."/>
            <person name="Haikawa Y."/>
            <person name="Hino Y."/>
            <person name="Yamamoto S."/>
            <person name="Sekine M."/>
            <person name="Baba S."/>
            <person name="Kosugi H."/>
            <person name="Hosoyama A."/>
            <person name="Nagai Y."/>
            <person name="Sakai M."/>
            <person name="Ogura K."/>
            <person name="Otsuka R."/>
            <person name="Nakazawa H."/>
            <person name="Takamiya M."/>
            <person name="Ohfuku Y."/>
            <person name="Funahashi T."/>
            <person name="Tanaka T."/>
            <person name="Kudoh Y."/>
            <person name="Yamazaki J."/>
            <person name="Kushida N."/>
            <person name="Oguchi A."/>
            <person name="Aoki K."/>
            <person name="Yoshizawa T."/>
            <person name="Nakamura Y."/>
            <person name="Robb F.T."/>
            <person name="Horikoshi K."/>
            <person name="Masuchi Y."/>
            <person name="Shizuya H."/>
            <person name="Kikuchi H."/>
        </authorList>
    </citation>
    <scope>NUCLEOTIDE SEQUENCE [LARGE SCALE GENOMIC DNA]</scope>
    <source>
        <strain>ATCC 700860 / DSM 12428 / JCM 9974 / NBRC 100139 / OT-3</strain>
    </source>
</reference>
<proteinExistence type="inferred from homology"/>
<name>IORB_PYRHO</name>
<feature type="chain" id="PRO_0000099935" description="Indolepyruvate oxidoreductase subunit IorB">
    <location>
        <begin position="1"/>
        <end position="202"/>
    </location>
</feature>